<gene>
    <name evidence="1" type="primary">proA</name>
    <name type="ordered locus">cbdbA1224</name>
</gene>
<evidence type="ECO:0000255" key="1">
    <source>
        <dbReference type="HAMAP-Rule" id="MF_00412"/>
    </source>
</evidence>
<reference key="1">
    <citation type="journal article" date="2005" name="Nat. Biotechnol.">
        <title>Genome sequence of the chlorinated compound-respiring bacterium Dehalococcoides species strain CBDB1.</title>
        <authorList>
            <person name="Kube M."/>
            <person name="Beck A."/>
            <person name="Zinder S.H."/>
            <person name="Kuhl H."/>
            <person name="Reinhardt R."/>
            <person name="Adrian L."/>
        </authorList>
    </citation>
    <scope>NUCLEOTIDE SEQUENCE [LARGE SCALE GENOMIC DNA]</scope>
    <source>
        <strain>CBDB1</strain>
    </source>
</reference>
<feature type="chain" id="PRO_0000230002" description="Gamma-glutamyl phosphate reductase">
    <location>
        <begin position="1"/>
        <end position="424"/>
    </location>
</feature>
<sequence>MEKALLEIEEKARLARAASRPLSYASSAQKDAALKNIARCLLDNEPAILEANLKDQNEAKASGMLPAMLDRLIIDQSRLEGIAKDTFAIAALPDPVGEIFDMNTMPNGLIIGKKRVPLGVIAAIYESRPNVTVDIASLCLKAGNAVILRGGKETIHSNTILAKLIRQAVEQAGLPKEAVQFIENTDRNLVNHLLKLSDQIDLVIPRGGAGLISYVKQNSFIPVVAGGIGVVHVYVDADAKVTDAVNIAYNSKVQRPTVCNAMDTLLVHKDIAPVFLPAVAAEWSKAGVEIRADEAALKILENTFGCKLIPATPDDWGKEFLALIAAVKVVDSLDEALSHIARYGSGHTESIVTQNYTSSQRFLNEVDAAAVMVNASTRFTDGSQFGLGAELGISTQKMHARGPMGLKEITSYKWIVYGSGQIRG</sequence>
<name>PROA_DEHMC</name>
<accession>Q3ZYH9</accession>
<keyword id="KW-0028">Amino-acid biosynthesis</keyword>
<keyword id="KW-0963">Cytoplasm</keyword>
<keyword id="KW-0521">NADP</keyword>
<keyword id="KW-0560">Oxidoreductase</keyword>
<keyword id="KW-0641">Proline biosynthesis</keyword>
<protein>
    <recommendedName>
        <fullName evidence="1">Gamma-glutamyl phosphate reductase</fullName>
        <shortName evidence="1">GPR</shortName>
        <ecNumber evidence="1">1.2.1.41</ecNumber>
    </recommendedName>
    <alternativeName>
        <fullName evidence="1">Glutamate-5-semialdehyde dehydrogenase</fullName>
    </alternativeName>
    <alternativeName>
        <fullName evidence="1">Glutamyl-gamma-semialdehyde dehydrogenase</fullName>
        <shortName evidence="1">GSA dehydrogenase</shortName>
    </alternativeName>
</protein>
<proteinExistence type="inferred from homology"/>
<dbReference type="EC" id="1.2.1.41" evidence="1"/>
<dbReference type="EMBL" id="AJ965256">
    <property type="protein sequence ID" value="CAI83295.1"/>
    <property type="molecule type" value="Genomic_DNA"/>
</dbReference>
<dbReference type="SMR" id="Q3ZYH9"/>
<dbReference type="KEGG" id="deh:cbdbA1224"/>
<dbReference type="HOGENOM" id="CLU_030231_0_0_0"/>
<dbReference type="UniPathway" id="UPA00098">
    <property type="reaction ID" value="UER00360"/>
</dbReference>
<dbReference type="Proteomes" id="UP000000433">
    <property type="component" value="Chromosome"/>
</dbReference>
<dbReference type="GO" id="GO:0005737">
    <property type="term" value="C:cytoplasm"/>
    <property type="evidence" value="ECO:0007669"/>
    <property type="project" value="UniProtKB-SubCell"/>
</dbReference>
<dbReference type="GO" id="GO:0004350">
    <property type="term" value="F:glutamate-5-semialdehyde dehydrogenase activity"/>
    <property type="evidence" value="ECO:0007669"/>
    <property type="project" value="UniProtKB-UniRule"/>
</dbReference>
<dbReference type="GO" id="GO:0050661">
    <property type="term" value="F:NADP binding"/>
    <property type="evidence" value="ECO:0007669"/>
    <property type="project" value="InterPro"/>
</dbReference>
<dbReference type="GO" id="GO:0055129">
    <property type="term" value="P:L-proline biosynthetic process"/>
    <property type="evidence" value="ECO:0007669"/>
    <property type="project" value="UniProtKB-UniRule"/>
</dbReference>
<dbReference type="CDD" id="cd07079">
    <property type="entry name" value="ALDH_F18-19_ProA-GPR"/>
    <property type="match status" value="1"/>
</dbReference>
<dbReference type="FunFam" id="3.40.309.10:FF:000006">
    <property type="entry name" value="Gamma-glutamyl phosphate reductase"/>
    <property type="match status" value="1"/>
</dbReference>
<dbReference type="Gene3D" id="3.40.605.10">
    <property type="entry name" value="Aldehyde Dehydrogenase, Chain A, domain 1"/>
    <property type="match status" value="1"/>
</dbReference>
<dbReference type="Gene3D" id="3.40.309.10">
    <property type="entry name" value="Aldehyde Dehydrogenase, Chain A, domain 2"/>
    <property type="match status" value="1"/>
</dbReference>
<dbReference type="HAMAP" id="MF_00412">
    <property type="entry name" value="ProA"/>
    <property type="match status" value="1"/>
</dbReference>
<dbReference type="InterPro" id="IPR016161">
    <property type="entry name" value="Ald_DH/histidinol_DH"/>
</dbReference>
<dbReference type="InterPro" id="IPR016163">
    <property type="entry name" value="Ald_DH_C"/>
</dbReference>
<dbReference type="InterPro" id="IPR016162">
    <property type="entry name" value="Ald_DH_N"/>
</dbReference>
<dbReference type="InterPro" id="IPR015590">
    <property type="entry name" value="Aldehyde_DH_dom"/>
</dbReference>
<dbReference type="InterPro" id="IPR020593">
    <property type="entry name" value="G-glutamylP_reductase_CS"/>
</dbReference>
<dbReference type="InterPro" id="IPR012134">
    <property type="entry name" value="Glu-5-SA_DH"/>
</dbReference>
<dbReference type="InterPro" id="IPR000965">
    <property type="entry name" value="GPR_dom"/>
</dbReference>
<dbReference type="NCBIfam" id="NF001221">
    <property type="entry name" value="PRK00197.1"/>
    <property type="match status" value="1"/>
</dbReference>
<dbReference type="NCBIfam" id="TIGR00407">
    <property type="entry name" value="proA"/>
    <property type="match status" value="1"/>
</dbReference>
<dbReference type="PANTHER" id="PTHR11063:SF8">
    <property type="entry name" value="DELTA-1-PYRROLINE-5-CARBOXYLATE SYNTHASE"/>
    <property type="match status" value="1"/>
</dbReference>
<dbReference type="PANTHER" id="PTHR11063">
    <property type="entry name" value="GLUTAMATE SEMIALDEHYDE DEHYDROGENASE"/>
    <property type="match status" value="1"/>
</dbReference>
<dbReference type="Pfam" id="PF00171">
    <property type="entry name" value="Aldedh"/>
    <property type="match status" value="1"/>
</dbReference>
<dbReference type="PIRSF" id="PIRSF000151">
    <property type="entry name" value="GPR"/>
    <property type="match status" value="1"/>
</dbReference>
<dbReference type="SUPFAM" id="SSF53720">
    <property type="entry name" value="ALDH-like"/>
    <property type="match status" value="1"/>
</dbReference>
<dbReference type="PROSITE" id="PS01223">
    <property type="entry name" value="PROA"/>
    <property type="match status" value="1"/>
</dbReference>
<organism>
    <name type="scientific">Dehalococcoides mccartyi (strain CBDB1)</name>
    <dbReference type="NCBI Taxonomy" id="255470"/>
    <lineage>
        <taxon>Bacteria</taxon>
        <taxon>Bacillati</taxon>
        <taxon>Chloroflexota</taxon>
        <taxon>Dehalococcoidia</taxon>
        <taxon>Dehalococcoidales</taxon>
        <taxon>Dehalococcoidaceae</taxon>
        <taxon>Dehalococcoides</taxon>
    </lineage>
</organism>
<comment type="function">
    <text evidence="1">Catalyzes the NADPH-dependent reduction of L-glutamate 5-phosphate into L-glutamate 5-semialdehyde and phosphate. The product spontaneously undergoes cyclization to form 1-pyrroline-5-carboxylate.</text>
</comment>
<comment type="catalytic activity">
    <reaction evidence="1">
        <text>L-glutamate 5-semialdehyde + phosphate + NADP(+) = L-glutamyl 5-phosphate + NADPH + H(+)</text>
        <dbReference type="Rhea" id="RHEA:19541"/>
        <dbReference type="ChEBI" id="CHEBI:15378"/>
        <dbReference type="ChEBI" id="CHEBI:43474"/>
        <dbReference type="ChEBI" id="CHEBI:57783"/>
        <dbReference type="ChEBI" id="CHEBI:58066"/>
        <dbReference type="ChEBI" id="CHEBI:58274"/>
        <dbReference type="ChEBI" id="CHEBI:58349"/>
        <dbReference type="EC" id="1.2.1.41"/>
    </reaction>
</comment>
<comment type="pathway">
    <text evidence="1">Amino-acid biosynthesis; L-proline biosynthesis; L-glutamate 5-semialdehyde from L-glutamate: step 2/2.</text>
</comment>
<comment type="subcellular location">
    <subcellularLocation>
        <location evidence="1">Cytoplasm</location>
    </subcellularLocation>
</comment>
<comment type="similarity">
    <text evidence="1">Belongs to the gamma-glutamyl phosphate reductase family.</text>
</comment>